<reference evidence="6" key="1">
    <citation type="journal article" date="2024" name="J. Venom. Anim. Toxins Incl. Trop. Dis.">
        <title>Isolation and cDNA cloning of four peptide toxins from the sea anemone Heteractis aurora.</title>
        <authorList>
            <person name="Homma T."/>
            <person name="Ishida M."/>
            <person name="Nagashima Y."/>
            <person name="Shiomi K."/>
        </authorList>
    </citation>
    <scope>NUCLEOTIDE SEQUENCE [MRNA]</scope>
    <scope>PROTEIN SEQUENCE OF 32-59</scope>
    <scope>MASS SPECTROMETRY</scope>
    <scope>TOXIC DOSE</scope>
    <scope>HYDROXYLATION AT PRO-36</scope>
</reference>
<keyword id="KW-0903">Direct protein sequencing</keyword>
<keyword id="KW-1015">Disulfide bond</keyword>
<keyword id="KW-0379">Hydroxylation</keyword>
<keyword id="KW-0166">Nematocyst</keyword>
<keyword id="KW-0964">Secreted</keyword>
<keyword id="KW-0732">Signal</keyword>
<keyword id="KW-0800">Toxin</keyword>
<evidence type="ECO:0000255" key="1"/>
<evidence type="ECO:0000269" key="2">
    <source>
    </source>
</evidence>
<evidence type="ECO:0000303" key="3">
    <source>
    </source>
</evidence>
<evidence type="ECO:0000305" key="4"/>
<evidence type="ECO:0000305" key="5">
    <source>
    </source>
</evidence>
<evidence type="ECO:0000312" key="6">
    <source>
        <dbReference type="EMBL" id="BAS68532.1"/>
    </source>
</evidence>
<gene>
    <name evidence="6" type="primary">HAUTX1</name>
</gene>
<name>TX1A_HETAU</name>
<sequence length="62" mass="7123">MKPAIFLMLFVAMFLISEGEGFKPKDAPQERSVFSPVVQSCPRCHRRDHFGKCRKLDPCPDK</sequence>
<comment type="function">
    <text evidence="2 5">Toxin that is lethal to crab (PubMed:39530114). Does not produce the typical symptoms associated with sodium channel toxins in crabs, suggesting that it likely does not act on sodium channels (Probable).</text>
</comment>
<comment type="subcellular location">
    <subcellularLocation>
        <location evidence="4">Secreted</location>
    </subcellularLocation>
    <subcellularLocation>
        <location evidence="4">Nematocyst</location>
    </subcellularLocation>
</comment>
<comment type="mass spectrometry" mass="3490.0" method="MALDI" evidence="2"/>
<comment type="toxic dose">
    <text evidence="2">LD(50) is 14 ug/kg when injected into the body cavity of freshwater crabs (G.dehaani).</text>
</comment>
<comment type="similarity">
    <text evidence="4">Belongs to the Hau1a/HC18/HC19 family.</text>
</comment>
<feature type="signal peptide" evidence="1">
    <location>
        <begin position="1"/>
        <end position="21"/>
    </location>
</feature>
<feature type="propeptide" id="PRO_0000462068" evidence="5">
    <location>
        <begin position="22"/>
        <end position="31"/>
    </location>
</feature>
<feature type="peptide" id="PRO_5006056079" description="U-stichotoxin-Hau1a" evidence="2">
    <location>
        <begin position="32"/>
        <end position="61"/>
    </location>
</feature>
<feature type="modified residue" description="Hydroxyproline" evidence="2">
    <location>
        <position position="36"/>
    </location>
</feature>
<feature type="disulfide bond" evidence="4">
    <location>
        <begin position="41"/>
        <end position="53"/>
    </location>
</feature>
<feature type="disulfide bond" evidence="4">
    <location>
        <begin position="44"/>
        <end position="59"/>
    </location>
</feature>
<proteinExistence type="evidence at protein level"/>
<accession>A0A0P0UTJ1</accession>
<dbReference type="EMBL" id="LC054037">
    <property type="protein sequence ID" value="BAS68532.1"/>
    <property type="molecule type" value="mRNA"/>
</dbReference>
<dbReference type="GO" id="GO:0005576">
    <property type="term" value="C:extracellular region"/>
    <property type="evidence" value="ECO:0007669"/>
    <property type="project" value="UniProtKB-SubCell"/>
</dbReference>
<dbReference type="GO" id="GO:0042151">
    <property type="term" value="C:nematocyst"/>
    <property type="evidence" value="ECO:0007669"/>
    <property type="project" value="UniProtKB-SubCell"/>
</dbReference>
<protein>
    <recommendedName>
        <fullName evidence="3">U-stichotoxin-Hau1a</fullName>
        <shortName evidence="3">U-SHTX-Hau1a</shortName>
    </recommendedName>
    <alternativeName>
        <fullName evidence="3">Hau I</fullName>
    </alternativeName>
</protein>
<organism>
    <name type="scientific">Heteractis aurora</name>
    <name type="common">Banded sea anemone</name>
    <name type="synonym">Actinia aurora</name>
    <dbReference type="NCBI Taxonomy" id="478399"/>
    <lineage>
        <taxon>Eukaryota</taxon>
        <taxon>Metazoa</taxon>
        <taxon>Cnidaria</taxon>
        <taxon>Anthozoa</taxon>
        <taxon>Hexacorallia</taxon>
        <taxon>Actiniaria</taxon>
        <taxon>Stichodactylidae</taxon>
        <taxon>Heteractis</taxon>
    </lineage>
</organism>